<reference key="1">
    <citation type="submission" date="2005-02" db="EMBL/GenBank/DDBJ databases">
        <authorList>
            <consortium name="NIH - Zebrafish Gene Collection (ZGC) project"/>
        </authorList>
    </citation>
    <scope>NUCLEOTIDE SEQUENCE [LARGE SCALE MRNA]</scope>
    <source>
        <tissue>Embryo</tissue>
    </source>
</reference>
<reference key="2">
    <citation type="journal article" date="2007" name="Biochemistry">
        <title>Specificity of zebrafish retinol saturase: formation of all-trans-13,14-dihydroretinol and all-trans-7,8-dihydroretinol.</title>
        <authorList>
            <person name="Moise A.R."/>
            <person name="Isken A."/>
            <person name="Dominguez M."/>
            <person name="de Lera A.R."/>
            <person name="von Lintig J."/>
            <person name="Palczewski K."/>
        </authorList>
    </citation>
    <scope>FUNCTION</scope>
    <scope>CATALYTIC ACTIVITY</scope>
    <scope>DEVELOPMENTAL STAGE</scope>
</reference>
<evidence type="ECO:0000250" key="1">
    <source>
        <dbReference type="UniProtKB" id="Q64FW2"/>
    </source>
</evidence>
<evidence type="ECO:0000250" key="2">
    <source>
        <dbReference type="UniProtKB" id="Q8S4R4"/>
    </source>
</evidence>
<evidence type="ECO:0000255" key="3"/>
<evidence type="ECO:0000269" key="4">
    <source>
    </source>
</evidence>
<evidence type="ECO:0000303" key="5">
    <source>
    </source>
</evidence>
<evidence type="ECO:0000305" key="6"/>
<evidence type="ECO:0000305" key="7">
    <source>
    </source>
</evidence>
<organism>
    <name type="scientific">Danio rerio</name>
    <name type="common">Zebrafish</name>
    <name type="synonym">Brachydanio rerio</name>
    <dbReference type="NCBI Taxonomy" id="7955"/>
    <lineage>
        <taxon>Eukaryota</taxon>
        <taxon>Metazoa</taxon>
        <taxon>Chordata</taxon>
        <taxon>Craniata</taxon>
        <taxon>Vertebrata</taxon>
        <taxon>Euteleostomi</taxon>
        <taxon>Actinopterygii</taxon>
        <taxon>Neopterygii</taxon>
        <taxon>Teleostei</taxon>
        <taxon>Ostariophysi</taxon>
        <taxon>Cypriniformes</taxon>
        <taxon>Danionidae</taxon>
        <taxon>Danioninae</taxon>
        <taxon>Danio</taxon>
    </lineage>
</organism>
<protein>
    <recommendedName>
        <fullName evidence="5">All-trans-retinol 13,14-reductase</fullName>
        <ecNumber evidence="4">1.3.99.23</ecNumber>
    </recommendedName>
    <alternativeName>
        <fullName evidence="5">All-trans-13,14-dihydroretinol saturase A</fullName>
        <shortName evidence="5">RetSat A</shortName>
    </alternativeName>
    <alternativeName>
        <fullName evidence="7">All-trans-retinol 7,8-reductase</fullName>
    </alternativeName>
</protein>
<comment type="function">
    <text evidence="4">Catalyzes the saturation of all-trans-retinol to all-trans-13,14-dihydroretinol. In addition, saturates the 7-8 double bond of all-trans-retinol to produce all-trans-7,8-dihydroretinol. Can also use vitamin A2 (all-trans-3,4-didehydroretinol) as a substrate, to produce all-trans-13,14-dihydro-3,4-didehydroretinol or all-trans-7,8-dihydro-3,4-didehydroretinol. May play a role in vitamin A metabolism.</text>
</comment>
<comment type="catalytic activity">
    <reaction evidence="4">
        <text>all-trans-13,14-dihydroretinol + A = all-trans-retinol + AH2</text>
        <dbReference type="Rhea" id="RHEA:19193"/>
        <dbReference type="ChEBI" id="CHEBI:13193"/>
        <dbReference type="ChEBI" id="CHEBI:17336"/>
        <dbReference type="ChEBI" id="CHEBI:17499"/>
        <dbReference type="ChEBI" id="CHEBI:52075"/>
        <dbReference type="EC" id="1.3.99.23"/>
    </reaction>
</comment>
<comment type="cofactor">
    <cofactor evidence="2">
        <name>NAD(+)</name>
        <dbReference type="ChEBI" id="CHEBI:57540"/>
    </cofactor>
    <cofactor evidence="2">
        <name>NADP(+)</name>
        <dbReference type="ChEBI" id="CHEBI:58349"/>
    </cofactor>
    <cofactor evidence="2">
        <name>FAD</name>
        <dbReference type="ChEBI" id="CHEBI:57692"/>
    </cofactor>
</comment>
<comment type="subcellular location">
    <subcellularLocation>
        <location evidence="1">Endoplasmic reticulum membrane</location>
        <topology evidence="1">Peripheral membrane protein</topology>
    </subcellularLocation>
</comment>
<comment type="developmental stage">
    <text evidence="4">Expressed in liver at 72 hours post-fertilization (hpf) and gut at 96 hpf. Not detected at earlier stages of development.</text>
</comment>
<comment type="similarity">
    <text evidence="6">Belongs to the carotenoid/retinoid oxidoreductase family. CrtISO subfamily.</text>
</comment>
<keyword id="KW-0256">Endoplasmic reticulum</keyword>
<keyword id="KW-0274">FAD</keyword>
<keyword id="KW-0285">Flavoprotein</keyword>
<keyword id="KW-0443">Lipid metabolism</keyword>
<keyword id="KW-0472">Membrane</keyword>
<keyword id="KW-0520">NAD</keyword>
<keyword id="KW-0521">NADP</keyword>
<keyword id="KW-0560">Oxidoreductase</keyword>
<keyword id="KW-1185">Reference proteome</keyword>
<keyword id="KW-0732">Signal</keyword>
<accession>Q5BLE8</accession>
<accession>Q6DBT4</accession>
<feature type="signal peptide" evidence="3">
    <location>
        <begin position="1"/>
        <end position="22"/>
    </location>
</feature>
<feature type="chain" id="PRO_0000225669" description="All-trans-retinol 13,14-reductase">
    <location>
        <begin position="23"/>
        <end position="607"/>
    </location>
</feature>
<feature type="sequence conflict" description="In Ref. 1; AAH78372." evidence="6" ref="1">
    <original>L</original>
    <variation>S</variation>
    <location>
        <position position="572"/>
    </location>
</feature>
<dbReference type="EC" id="1.3.99.23" evidence="4"/>
<dbReference type="EMBL" id="BC078372">
    <property type="protein sequence ID" value="AAH78372.1"/>
    <property type="molecule type" value="mRNA"/>
</dbReference>
<dbReference type="EMBL" id="BC090469">
    <property type="protein sequence ID" value="AAH90469.1"/>
    <property type="molecule type" value="mRNA"/>
</dbReference>
<dbReference type="RefSeq" id="NP_001015061.1">
    <property type="nucleotide sequence ID" value="NM_001015061.2"/>
</dbReference>
<dbReference type="SMR" id="Q5BLE8"/>
<dbReference type="FunCoup" id="Q5BLE8">
    <property type="interactions" value="68"/>
</dbReference>
<dbReference type="STRING" id="7955.ENSDARP00000024120"/>
<dbReference type="PaxDb" id="7955-ENSDARP00000024120"/>
<dbReference type="Ensembl" id="ENSDART00000013167">
    <property type="protein sequence ID" value="ENSDARP00000024120"/>
    <property type="gene ID" value="ENSDARG00000018600"/>
</dbReference>
<dbReference type="GeneID" id="325922"/>
<dbReference type="KEGG" id="dre:325922"/>
<dbReference type="AGR" id="ZFIN:ZDB-GENE-050320-11"/>
<dbReference type="CTD" id="325922"/>
<dbReference type="ZFIN" id="ZDB-GENE-050320-11">
    <property type="gene designation" value="retsat.2"/>
</dbReference>
<dbReference type="eggNOG" id="KOG4254">
    <property type="taxonomic scope" value="Eukaryota"/>
</dbReference>
<dbReference type="HOGENOM" id="CLU_019722_1_0_1"/>
<dbReference type="InParanoid" id="Q5BLE8"/>
<dbReference type="OMA" id="AFMFADW"/>
<dbReference type="OrthoDB" id="38045at2759"/>
<dbReference type="PhylomeDB" id="Q5BLE8"/>
<dbReference type="TreeFam" id="TF328375"/>
<dbReference type="BRENDA" id="1.3.99.23">
    <property type="organism ID" value="928"/>
</dbReference>
<dbReference type="PRO" id="PR:Q5BLE8"/>
<dbReference type="Proteomes" id="UP000000437">
    <property type="component" value="Chromosome 3"/>
</dbReference>
<dbReference type="Bgee" id="ENSDARG00000018600">
    <property type="expression patterns" value="Expressed in liver and 27 other cell types or tissues"/>
</dbReference>
<dbReference type="GO" id="GO:0005789">
    <property type="term" value="C:endoplasmic reticulum membrane"/>
    <property type="evidence" value="ECO:0000318"/>
    <property type="project" value="GO_Central"/>
</dbReference>
<dbReference type="GO" id="GO:0051786">
    <property type="term" value="F:all-trans-retinol 13,14-reductase activity"/>
    <property type="evidence" value="ECO:0000314"/>
    <property type="project" value="ZFIN"/>
</dbReference>
<dbReference type="GO" id="GO:0042572">
    <property type="term" value="P:retinol metabolic process"/>
    <property type="evidence" value="ECO:0000318"/>
    <property type="project" value="GO_Central"/>
</dbReference>
<dbReference type="FunFam" id="3.50.50.60:FF:000362">
    <property type="entry name" value="All-trans-retinol 13,14-reductase"/>
    <property type="match status" value="1"/>
</dbReference>
<dbReference type="Gene3D" id="3.50.50.60">
    <property type="entry name" value="FAD/NAD(P)-binding domain"/>
    <property type="match status" value="2"/>
</dbReference>
<dbReference type="InterPro" id="IPR002937">
    <property type="entry name" value="Amino_oxidase"/>
</dbReference>
<dbReference type="InterPro" id="IPR036188">
    <property type="entry name" value="FAD/NAD-bd_sf"/>
</dbReference>
<dbReference type="InterPro" id="IPR052206">
    <property type="entry name" value="Retinol_saturase"/>
</dbReference>
<dbReference type="PANTHER" id="PTHR46091:SF1">
    <property type="entry name" value="ALL-TRANS-RETINOL 13,14-REDUCTASE"/>
    <property type="match status" value="1"/>
</dbReference>
<dbReference type="PANTHER" id="PTHR46091">
    <property type="entry name" value="BLR7054 PROTEIN"/>
    <property type="match status" value="1"/>
</dbReference>
<dbReference type="Pfam" id="PF01593">
    <property type="entry name" value="Amino_oxidase"/>
    <property type="match status" value="1"/>
</dbReference>
<dbReference type="SUPFAM" id="SSF51905">
    <property type="entry name" value="FAD/NAD(P)-binding domain"/>
    <property type="match status" value="1"/>
</dbReference>
<gene>
    <name evidence="6" type="primary">retsat</name>
    <name evidence="5" type="synonym">retsata</name>
    <name type="ORF">zgc:113107</name>
</gene>
<sequence>MWFAVVAIFLALVAFLYRYVVGSGPNPFAIDTREPLKPMVFDRKLKNKVLKQGFLASRVPEDLDAVVVGSGIGGLAIAVLLAKVGKKVLVLEQHDRAGGCCHTFKEQGFEFDVGIHYIGELSNHKPLRCIIDQMTNGQLQWDPLENPFDNVVIGPPENRRIYQIYSGRKRYMDELKKCFPGEEKAIDEYVRLCKEVGQGVWVMVLLKFLPTPIANFLVRTGLANRLTSFSRYASRSLTDVVNELTQNKDLRAVLSYIFGTYGKIPKEASFSMHSLIVNHYMNGAWYPKGGATEIAYHMIPIIEKAGGAVLVRAPVNRILLNDAKEAIGVSVLKGQEEVHVRAPIVISDAGIFNTYEYLLPKDVQTMPAIQKQLSMLQHGDSGLSIFIGLDGTKEELGLKADNYFIYPENNIDELLEDYRSGNREESAKKNPLIFVASPSAKDSTWPERTPGKSTLTVVSFANYEWFEEWKDDKVKNRSTDYKQLKELFINYILEAVTEIYPKIKDRIEYVDAGTPITNQHYIAAPRGEIYGADHGIPRFSAELNATIRAQTPIKNLYLTGQDLMLCGFAGALTGALTCGSVILNRNLHLEAFSLAKRVQNGNNKKKT</sequence>
<name>RETST_DANRE</name>
<proteinExistence type="evidence at protein level"/>